<evidence type="ECO:0000255" key="1">
    <source>
        <dbReference type="HAMAP-Rule" id="MF_02105"/>
    </source>
</evidence>
<protein>
    <recommendedName>
        <fullName evidence="1">Lactate utilization protein A 1</fullName>
    </recommendedName>
</protein>
<organism>
    <name type="scientific">Bacillus cereus (strain AH820)</name>
    <dbReference type="NCBI Taxonomy" id="405535"/>
    <lineage>
        <taxon>Bacteria</taxon>
        <taxon>Bacillati</taxon>
        <taxon>Bacillota</taxon>
        <taxon>Bacilli</taxon>
        <taxon>Bacillales</taxon>
        <taxon>Bacillaceae</taxon>
        <taxon>Bacillus</taxon>
        <taxon>Bacillus cereus group</taxon>
    </lineage>
</organism>
<dbReference type="EMBL" id="CP001283">
    <property type="protein sequence ID" value="ACK87867.1"/>
    <property type="molecule type" value="Genomic_DNA"/>
</dbReference>
<dbReference type="RefSeq" id="WP_000869153.1">
    <property type="nucleotide sequence ID" value="NC_011773.1"/>
</dbReference>
<dbReference type="SMR" id="B7JF00"/>
<dbReference type="KEGG" id="bcu:BCAH820_1392"/>
<dbReference type="HOGENOM" id="CLU_023081_1_0_9"/>
<dbReference type="Proteomes" id="UP000001363">
    <property type="component" value="Chromosome"/>
</dbReference>
<dbReference type="GO" id="GO:0005829">
    <property type="term" value="C:cytosol"/>
    <property type="evidence" value="ECO:0007669"/>
    <property type="project" value="TreeGrafter"/>
</dbReference>
<dbReference type="GO" id="GO:0016491">
    <property type="term" value="F:oxidoreductase activity"/>
    <property type="evidence" value="ECO:0007669"/>
    <property type="project" value="UniProtKB-ARBA"/>
</dbReference>
<dbReference type="GO" id="GO:0006089">
    <property type="term" value="P:lactate metabolic process"/>
    <property type="evidence" value="ECO:0007669"/>
    <property type="project" value="UniProtKB-UniRule"/>
</dbReference>
<dbReference type="HAMAP" id="MF_02105">
    <property type="entry name" value="LutA"/>
    <property type="match status" value="1"/>
</dbReference>
<dbReference type="InterPro" id="IPR004017">
    <property type="entry name" value="Cys_rich_dom"/>
</dbReference>
<dbReference type="InterPro" id="IPR022822">
    <property type="entry name" value="LutA"/>
</dbReference>
<dbReference type="PANTHER" id="PTHR30296:SF0">
    <property type="entry name" value="LACTATE UTILIZATION PROTEIN A"/>
    <property type="match status" value="1"/>
</dbReference>
<dbReference type="PANTHER" id="PTHR30296">
    <property type="entry name" value="UNCHARACTERIZED PROTEIN YKGE"/>
    <property type="match status" value="1"/>
</dbReference>
<dbReference type="Pfam" id="PF02754">
    <property type="entry name" value="CCG"/>
    <property type="match status" value="2"/>
</dbReference>
<gene>
    <name evidence="1" type="primary">lutA1</name>
    <name type="ordered locus">BCAH820_1392</name>
</gene>
<name>LUTA1_BACC0</name>
<reference key="1">
    <citation type="submission" date="2008-10" db="EMBL/GenBank/DDBJ databases">
        <title>Genome sequence of Bacillus cereus AH820.</title>
        <authorList>
            <person name="Dodson R.J."/>
            <person name="Durkin A.S."/>
            <person name="Rosovitz M.J."/>
            <person name="Rasko D.A."/>
            <person name="Hoffmaster A."/>
            <person name="Ravel J."/>
            <person name="Sutton G."/>
        </authorList>
    </citation>
    <scope>NUCLEOTIDE SEQUENCE [LARGE SCALE GENOMIC DNA]</scope>
    <source>
        <strain>AH820</strain>
    </source>
</reference>
<sequence>MKVTLFVTCLVDMFETNVGKATVEVLERLGCEIEFPEAQVCCGQPAYNSGHVEAAKEAMKHMIETFEDAEYIVTPSGSCATMFHEYPHVFKDDPKWAKRAQKVADKTYEFTQFIVDVLNVTDVGASLPGIATIHKSCHMTRMLGVTEAPGILLSNVKGLTVRELPNVQNCCGFGGTFSVKMTPISEQMVDEKVDSAMETGADYLIGADCGCLLNIGGRIERLGKEIKVMHIAEVLNSRS</sequence>
<feature type="chain" id="PRO_0000384025" description="Lactate utilization protein A 1">
    <location>
        <begin position="1"/>
        <end position="239"/>
    </location>
</feature>
<accession>B7JF00</accession>
<comment type="function">
    <text evidence="1">Is involved in L-lactate degradation and allows cells to grow with lactate as the sole carbon source.</text>
</comment>
<comment type="similarity">
    <text evidence="1">Belongs to the LutA/YkgE family.</text>
</comment>
<proteinExistence type="inferred from homology"/>